<keyword id="KW-0408">Iron</keyword>
<keyword id="KW-0411">Iron-sulfur</keyword>
<keyword id="KW-0479">Metal-binding</keyword>
<sequence length="123" mass="13255">MNAVTESAATTAEMPVPFVFTDAAADKVKQLIDEEGNPDLKLRVFVQGGGCSGFQYGFTFDEEVNEDDTVMNKNGVQLLIDSMSYQYLVGAEIDYKDDLNGAQFVIKNPNASTTCGCGSSFSV</sequence>
<proteinExistence type="inferred from homology"/>
<protein>
    <recommendedName>
        <fullName evidence="1">Putative iron-sulfur cluster insertion protein ErpA</fullName>
    </recommendedName>
</protein>
<gene>
    <name evidence="1" type="primary">erpA</name>
    <name type="ordered locus">Bcep18194_A3767</name>
</gene>
<dbReference type="EMBL" id="CP000151">
    <property type="protein sequence ID" value="ABB07368.1"/>
    <property type="molecule type" value="Genomic_DNA"/>
</dbReference>
<dbReference type="RefSeq" id="WP_011350956.1">
    <property type="nucleotide sequence ID" value="NZ_WNDV01000019.1"/>
</dbReference>
<dbReference type="SMR" id="Q39JJ8"/>
<dbReference type="GeneID" id="93193086"/>
<dbReference type="KEGG" id="bur:Bcep18194_A3767"/>
<dbReference type="HOGENOM" id="CLU_069054_5_3_4"/>
<dbReference type="Proteomes" id="UP000002705">
    <property type="component" value="Chromosome 1"/>
</dbReference>
<dbReference type="GO" id="GO:0051537">
    <property type="term" value="F:2 iron, 2 sulfur cluster binding"/>
    <property type="evidence" value="ECO:0007669"/>
    <property type="project" value="UniProtKB-ARBA"/>
</dbReference>
<dbReference type="GO" id="GO:0051539">
    <property type="term" value="F:4 iron, 4 sulfur cluster binding"/>
    <property type="evidence" value="ECO:0007669"/>
    <property type="project" value="TreeGrafter"/>
</dbReference>
<dbReference type="GO" id="GO:0005506">
    <property type="term" value="F:iron ion binding"/>
    <property type="evidence" value="ECO:0007669"/>
    <property type="project" value="UniProtKB-UniRule"/>
</dbReference>
<dbReference type="GO" id="GO:0016226">
    <property type="term" value="P:iron-sulfur cluster assembly"/>
    <property type="evidence" value="ECO:0007669"/>
    <property type="project" value="UniProtKB-UniRule"/>
</dbReference>
<dbReference type="FunFam" id="2.60.300.12:FF:000002">
    <property type="entry name" value="Iron-sulfur cluster insertion protein ErpA"/>
    <property type="match status" value="1"/>
</dbReference>
<dbReference type="Gene3D" id="2.60.300.12">
    <property type="entry name" value="HesB-like domain"/>
    <property type="match status" value="1"/>
</dbReference>
<dbReference type="HAMAP" id="MF_01380">
    <property type="entry name" value="Fe_S_insert_ErpA"/>
    <property type="match status" value="1"/>
</dbReference>
<dbReference type="InterPro" id="IPR000361">
    <property type="entry name" value="FeS_biogenesis"/>
</dbReference>
<dbReference type="InterPro" id="IPR016092">
    <property type="entry name" value="FeS_cluster_insertion"/>
</dbReference>
<dbReference type="InterPro" id="IPR017870">
    <property type="entry name" value="FeS_cluster_insertion_CS"/>
</dbReference>
<dbReference type="InterPro" id="IPR023063">
    <property type="entry name" value="FeS_cluster_insertion_RrpA"/>
</dbReference>
<dbReference type="InterPro" id="IPR035903">
    <property type="entry name" value="HesB-like_dom_sf"/>
</dbReference>
<dbReference type="NCBIfam" id="TIGR00049">
    <property type="entry name" value="iron-sulfur cluster assembly accessory protein"/>
    <property type="match status" value="1"/>
</dbReference>
<dbReference type="NCBIfam" id="NF010147">
    <property type="entry name" value="PRK13623.1"/>
    <property type="match status" value="1"/>
</dbReference>
<dbReference type="PANTHER" id="PTHR43011">
    <property type="entry name" value="IRON-SULFUR CLUSTER ASSEMBLY 2 HOMOLOG, MITOCHONDRIAL"/>
    <property type="match status" value="1"/>
</dbReference>
<dbReference type="PANTHER" id="PTHR43011:SF1">
    <property type="entry name" value="IRON-SULFUR CLUSTER ASSEMBLY 2 HOMOLOG, MITOCHONDRIAL"/>
    <property type="match status" value="1"/>
</dbReference>
<dbReference type="Pfam" id="PF01521">
    <property type="entry name" value="Fe-S_biosyn"/>
    <property type="match status" value="1"/>
</dbReference>
<dbReference type="SUPFAM" id="SSF89360">
    <property type="entry name" value="HesB-like domain"/>
    <property type="match status" value="1"/>
</dbReference>
<dbReference type="PROSITE" id="PS01152">
    <property type="entry name" value="HESB"/>
    <property type="match status" value="1"/>
</dbReference>
<feature type="chain" id="PRO_0000311465" description="Putative iron-sulfur cluster insertion protein ErpA">
    <location>
        <begin position="1"/>
        <end position="123"/>
    </location>
</feature>
<feature type="binding site" evidence="1">
    <location>
        <position position="51"/>
    </location>
    <ligand>
        <name>iron-sulfur cluster</name>
        <dbReference type="ChEBI" id="CHEBI:30408"/>
    </ligand>
</feature>
<feature type="binding site" evidence="1">
    <location>
        <position position="115"/>
    </location>
    <ligand>
        <name>iron-sulfur cluster</name>
        <dbReference type="ChEBI" id="CHEBI:30408"/>
    </ligand>
</feature>
<feature type="binding site" evidence="1">
    <location>
        <position position="117"/>
    </location>
    <ligand>
        <name>iron-sulfur cluster</name>
        <dbReference type="ChEBI" id="CHEBI:30408"/>
    </ligand>
</feature>
<comment type="function">
    <text evidence="1">Required for insertion of 4Fe-4S clusters.</text>
</comment>
<comment type="cofactor">
    <cofactor evidence="1">
        <name>iron-sulfur cluster</name>
        <dbReference type="ChEBI" id="CHEBI:30408"/>
    </cofactor>
    <text evidence="1">Binds 1 iron-sulfur cluster per subunit.</text>
</comment>
<comment type="subunit">
    <text evidence="1">Homodimer.</text>
</comment>
<comment type="similarity">
    <text evidence="1">Belongs to the HesB/IscA family.</text>
</comment>
<organism>
    <name type="scientific">Burkholderia lata (strain ATCC 17760 / DSM 23089 / LMG 22485 / NCIMB 9086 / R18194 / 383)</name>
    <dbReference type="NCBI Taxonomy" id="482957"/>
    <lineage>
        <taxon>Bacteria</taxon>
        <taxon>Pseudomonadati</taxon>
        <taxon>Pseudomonadota</taxon>
        <taxon>Betaproteobacteria</taxon>
        <taxon>Burkholderiales</taxon>
        <taxon>Burkholderiaceae</taxon>
        <taxon>Burkholderia</taxon>
        <taxon>Burkholderia cepacia complex</taxon>
    </lineage>
</organism>
<accession>Q39JJ8</accession>
<reference key="1">
    <citation type="submission" date="2005-10" db="EMBL/GenBank/DDBJ databases">
        <title>Complete sequence of chromosome 1 of Burkholderia sp. 383.</title>
        <authorList>
            <consortium name="US DOE Joint Genome Institute"/>
            <person name="Copeland A."/>
            <person name="Lucas S."/>
            <person name="Lapidus A."/>
            <person name="Barry K."/>
            <person name="Detter J.C."/>
            <person name="Glavina T."/>
            <person name="Hammon N."/>
            <person name="Israni S."/>
            <person name="Pitluck S."/>
            <person name="Chain P."/>
            <person name="Malfatti S."/>
            <person name="Shin M."/>
            <person name="Vergez L."/>
            <person name="Schmutz J."/>
            <person name="Larimer F."/>
            <person name="Land M."/>
            <person name="Kyrpides N."/>
            <person name="Lykidis A."/>
            <person name="Richardson P."/>
        </authorList>
    </citation>
    <scope>NUCLEOTIDE SEQUENCE [LARGE SCALE GENOMIC DNA]</scope>
    <source>
        <strain>ATCC 17760 / DSM 23089 / LMG 22485 / NCIMB 9086 / R18194 / 383</strain>
    </source>
</reference>
<name>ERPA_BURL3</name>
<evidence type="ECO:0000255" key="1">
    <source>
        <dbReference type="HAMAP-Rule" id="MF_01380"/>
    </source>
</evidence>